<feature type="chain" id="PRO_0000119702" description="Glutamate--tRNA ligase 2">
    <location>
        <begin position="1"/>
        <end position="453"/>
    </location>
</feature>
<feature type="short sequence motif" description="'HIGH' region" evidence="1">
    <location>
        <begin position="10"/>
        <end position="20"/>
    </location>
</feature>
<feature type="short sequence motif" description="'KMSKS' region" evidence="1">
    <location>
        <begin position="232"/>
        <end position="236"/>
    </location>
</feature>
<feature type="binding site" evidence="1">
    <location>
        <position position="235"/>
    </location>
    <ligand>
        <name>ATP</name>
        <dbReference type="ChEBI" id="CHEBI:30616"/>
    </ligand>
</feature>
<protein>
    <recommendedName>
        <fullName evidence="1">Glutamate--tRNA ligase 2</fullName>
        <ecNumber evidence="1">6.1.1.17</ecNumber>
    </recommendedName>
    <alternativeName>
        <fullName evidence="1">Glutamyl-tRNA synthetase 2</fullName>
        <shortName evidence="1">GluRS 2</shortName>
    </alternativeName>
</protein>
<sequence length="453" mass="51501">MPNIVTRFAPSPTGFLHIGGARTALFNWLYAKHHGGRFLLRIEDTDRKRSTQEAIDAIINGLKWLGVSYDGEIVYQSKRIERHIEVANLLVEKGKAYCCCCPEDKVAEKKAKAREERKIYKHKCTSVIPDAKPVVRFNVPDSQEIIVDDKIYGHIKVNSDQLDDMVILRSDNTPTYIFAVVVDDHDAGITDIIRGSDHLTNTFKQVLIYQALDFDIPRFAHVPLIHGRDGNKLSKRHGATSVCDYEKMGILPKAMRNYLLRLGWSHGNDEIISNEQAVKWFNLESIGRSPARLNFKKLEHLNNHYINNMSNEDILTLMLGESTLTNKKKNYLLQGLTELKKRANYLTELLDLAQFYIKDPPFDLSEEAEQVVKSNLDIIKLLASFLSNIGDKNWNKGFLSSQVKEFSKLHSAKISDIYHSLRAPITGVMDAPGIIDIMIILGKDECIRRLQAV</sequence>
<gene>
    <name evidence="1" type="primary">gltX2</name>
    <name type="ordered locus">Wbm0453</name>
</gene>
<reference key="1">
    <citation type="journal article" date="2005" name="PLoS Biol.">
        <title>The Wolbachia genome of Brugia malayi: endosymbiont evolution within a human pathogenic nematode.</title>
        <authorList>
            <person name="Foster J."/>
            <person name="Ganatra M."/>
            <person name="Kamal I."/>
            <person name="Ware J."/>
            <person name="Makarova K."/>
            <person name="Ivanova N."/>
            <person name="Bhattacharyya A."/>
            <person name="Kapatral V."/>
            <person name="Kumar S."/>
            <person name="Posfai J."/>
            <person name="Vincze T."/>
            <person name="Ingram J."/>
            <person name="Moran L."/>
            <person name="Lapidus A."/>
            <person name="Omelchenko M."/>
            <person name="Kyrpides N."/>
            <person name="Ghedin E."/>
            <person name="Wang S."/>
            <person name="Goltsman E."/>
            <person name="Joukov V."/>
            <person name="Ostrovskaya O."/>
            <person name="Tsukerman K."/>
            <person name="Mazur M."/>
            <person name="Comb D."/>
            <person name="Koonin E."/>
            <person name="Slatko B."/>
        </authorList>
    </citation>
    <scope>NUCLEOTIDE SEQUENCE [LARGE SCALE GENOMIC DNA]</scope>
    <source>
        <strain>TRS</strain>
    </source>
</reference>
<keyword id="KW-0030">Aminoacyl-tRNA synthetase</keyword>
<keyword id="KW-0067">ATP-binding</keyword>
<keyword id="KW-0963">Cytoplasm</keyword>
<keyword id="KW-0436">Ligase</keyword>
<keyword id="KW-0547">Nucleotide-binding</keyword>
<keyword id="KW-0648">Protein biosynthesis</keyword>
<keyword id="KW-1185">Reference proteome</keyword>
<dbReference type="EC" id="6.1.1.17" evidence="1"/>
<dbReference type="EMBL" id="AE017321">
    <property type="protein sequence ID" value="AAW71041.1"/>
    <property type="molecule type" value="Genomic_DNA"/>
</dbReference>
<dbReference type="RefSeq" id="WP_011256651.1">
    <property type="nucleotide sequence ID" value="NC_006833.1"/>
</dbReference>
<dbReference type="SMR" id="Q5GSI3"/>
<dbReference type="STRING" id="292805.Wbm0453"/>
<dbReference type="KEGG" id="wbm:Wbm0453"/>
<dbReference type="eggNOG" id="COG0008">
    <property type="taxonomic scope" value="Bacteria"/>
</dbReference>
<dbReference type="HOGENOM" id="CLU_015768_6_3_5"/>
<dbReference type="Proteomes" id="UP000000534">
    <property type="component" value="Chromosome"/>
</dbReference>
<dbReference type="GO" id="GO:0005829">
    <property type="term" value="C:cytosol"/>
    <property type="evidence" value="ECO:0007669"/>
    <property type="project" value="TreeGrafter"/>
</dbReference>
<dbReference type="GO" id="GO:0005524">
    <property type="term" value="F:ATP binding"/>
    <property type="evidence" value="ECO:0007669"/>
    <property type="project" value="UniProtKB-UniRule"/>
</dbReference>
<dbReference type="GO" id="GO:0004818">
    <property type="term" value="F:glutamate-tRNA ligase activity"/>
    <property type="evidence" value="ECO:0007669"/>
    <property type="project" value="UniProtKB-UniRule"/>
</dbReference>
<dbReference type="GO" id="GO:0000049">
    <property type="term" value="F:tRNA binding"/>
    <property type="evidence" value="ECO:0007669"/>
    <property type="project" value="InterPro"/>
</dbReference>
<dbReference type="GO" id="GO:0008270">
    <property type="term" value="F:zinc ion binding"/>
    <property type="evidence" value="ECO:0007669"/>
    <property type="project" value="InterPro"/>
</dbReference>
<dbReference type="GO" id="GO:0006424">
    <property type="term" value="P:glutamyl-tRNA aminoacylation"/>
    <property type="evidence" value="ECO:0007669"/>
    <property type="project" value="UniProtKB-UniRule"/>
</dbReference>
<dbReference type="CDD" id="cd00808">
    <property type="entry name" value="GluRS_core"/>
    <property type="match status" value="1"/>
</dbReference>
<dbReference type="FunFam" id="3.40.50.620:FF:000007">
    <property type="entry name" value="Glutamate--tRNA ligase"/>
    <property type="match status" value="1"/>
</dbReference>
<dbReference type="Gene3D" id="1.10.10.350">
    <property type="match status" value="1"/>
</dbReference>
<dbReference type="Gene3D" id="3.40.50.620">
    <property type="entry name" value="HUPs"/>
    <property type="match status" value="1"/>
</dbReference>
<dbReference type="HAMAP" id="MF_00022">
    <property type="entry name" value="Glu_tRNA_synth_type1"/>
    <property type="match status" value="1"/>
</dbReference>
<dbReference type="InterPro" id="IPR045462">
    <property type="entry name" value="aa-tRNA-synth_I_cd-bd"/>
</dbReference>
<dbReference type="InterPro" id="IPR020751">
    <property type="entry name" value="aa-tRNA-synth_I_codon-bd_sub2"/>
</dbReference>
<dbReference type="InterPro" id="IPR001412">
    <property type="entry name" value="aa-tRNA-synth_I_CS"/>
</dbReference>
<dbReference type="InterPro" id="IPR008925">
    <property type="entry name" value="aa_tRNA-synth_I_cd-bd_sf"/>
</dbReference>
<dbReference type="InterPro" id="IPR004527">
    <property type="entry name" value="Glu-tRNA-ligase_bac/mito"/>
</dbReference>
<dbReference type="InterPro" id="IPR000924">
    <property type="entry name" value="Glu/Gln-tRNA-synth"/>
</dbReference>
<dbReference type="InterPro" id="IPR020058">
    <property type="entry name" value="Glu/Gln-tRNA-synth_Ib_cat-dom"/>
</dbReference>
<dbReference type="InterPro" id="IPR049940">
    <property type="entry name" value="GluQ/Sye"/>
</dbReference>
<dbReference type="InterPro" id="IPR033910">
    <property type="entry name" value="GluRS_core"/>
</dbReference>
<dbReference type="InterPro" id="IPR014729">
    <property type="entry name" value="Rossmann-like_a/b/a_fold"/>
</dbReference>
<dbReference type="NCBIfam" id="TIGR00464">
    <property type="entry name" value="gltX_bact"/>
    <property type="match status" value="1"/>
</dbReference>
<dbReference type="PANTHER" id="PTHR43311">
    <property type="entry name" value="GLUTAMATE--TRNA LIGASE"/>
    <property type="match status" value="1"/>
</dbReference>
<dbReference type="PANTHER" id="PTHR43311:SF2">
    <property type="entry name" value="GLUTAMATE--TRNA LIGASE, MITOCHONDRIAL-RELATED"/>
    <property type="match status" value="1"/>
</dbReference>
<dbReference type="Pfam" id="PF19269">
    <property type="entry name" value="Anticodon_2"/>
    <property type="match status" value="1"/>
</dbReference>
<dbReference type="Pfam" id="PF00749">
    <property type="entry name" value="tRNA-synt_1c"/>
    <property type="match status" value="1"/>
</dbReference>
<dbReference type="PRINTS" id="PR00987">
    <property type="entry name" value="TRNASYNTHGLU"/>
</dbReference>
<dbReference type="SUPFAM" id="SSF48163">
    <property type="entry name" value="An anticodon-binding domain of class I aminoacyl-tRNA synthetases"/>
    <property type="match status" value="1"/>
</dbReference>
<dbReference type="SUPFAM" id="SSF52374">
    <property type="entry name" value="Nucleotidylyl transferase"/>
    <property type="match status" value="1"/>
</dbReference>
<dbReference type="PROSITE" id="PS00178">
    <property type="entry name" value="AA_TRNA_LIGASE_I"/>
    <property type="match status" value="1"/>
</dbReference>
<name>SYE2_WOLTR</name>
<proteinExistence type="inferred from homology"/>
<evidence type="ECO:0000255" key="1">
    <source>
        <dbReference type="HAMAP-Rule" id="MF_00022"/>
    </source>
</evidence>
<organism>
    <name type="scientific">Wolbachia sp. subsp. Brugia malayi (strain TRS)</name>
    <dbReference type="NCBI Taxonomy" id="292805"/>
    <lineage>
        <taxon>Bacteria</taxon>
        <taxon>Pseudomonadati</taxon>
        <taxon>Pseudomonadota</taxon>
        <taxon>Alphaproteobacteria</taxon>
        <taxon>Rickettsiales</taxon>
        <taxon>Anaplasmataceae</taxon>
        <taxon>Wolbachieae</taxon>
        <taxon>Wolbachia</taxon>
    </lineage>
</organism>
<accession>Q5GSI3</accession>
<comment type="function">
    <text evidence="1">Catalyzes the attachment of glutamate to tRNA(Glu) in a two-step reaction: glutamate is first activated by ATP to form Glu-AMP and then transferred to the acceptor end of tRNA(Glu).</text>
</comment>
<comment type="catalytic activity">
    <reaction evidence="1">
        <text>tRNA(Glu) + L-glutamate + ATP = L-glutamyl-tRNA(Glu) + AMP + diphosphate</text>
        <dbReference type="Rhea" id="RHEA:23540"/>
        <dbReference type="Rhea" id="RHEA-COMP:9663"/>
        <dbReference type="Rhea" id="RHEA-COMP:9680"/>
        <dbReference type="ChEBI" id="CHEBI:29985"/>
        <dbReference type="ChEBI" id="CHEBI:30616"/>
        <dbReference type="ChEBI" id="CHEBI:33019"/>
        <dbReference type="ChEBI" id="CHEBI:78442"/>
        <dbReference type="ChEBI" id="CHEBI:78520"/>
        <dbReference type="ChEBI" id="CHEBI:456215"/>
        <dbReference type="EC" id="6.1.1.17"/>
    </reaction>
</comment>
<comment type="subunit">
    <text evidence="1">Monomer.</text>
</comment>
<comment type="subcellular location">
    <subcellularLocation>
        <location evidence="1">Cytoplasm</location>
    </subcellularLocation>
</comment>
<comment type="similarity">
    <text evidence="1">Belongs to the class-I aminoacyl-tRNA synthetase family. Glutamate--tRNA ligase type 1 subfamily.</text>
</comment>